<evidence type="ECO:0000255" key="1">
    <source>
        <dbReference type="HAMAP-Rule" id="MF_01659"/>
    </source>
</evidence>
<dbReference type="EC" id="2.2.1.9" evidence="1"/>
<dbReference type="EMBL" id="AE016827">
    <property type="protein sequence ID" value="AAU38401.1"/>
    <property type="molecule type" value="Genomic_DNA"/>
</dbReference>
<dbReference type="RefSeq" id="WP_011200959.1">
    <property type="nucleotide sequence ID" value="NC_006300.1"/>
</dbReference>
<dbReference type="SMR" id="Q65RK9"/>
<dbReference type="STRING" id="221988.MS1794"/>
<dbReference type="KEGG" id="msu:MS1794"/>
<dbReference type="eggNOG" id="COG1165">
    <property type="taxonomic scope" value="Bacteria"/>
</dbReference>
<dbReference type="HOGENOM" id="CLU_006051_3_0_6"/>
<dbReference type="OrthoDB" id="9791859at2"/>
<dbReference type="UniPathway" id="UPA00079"/>
<dbReference type="UniPathway" id="UPA01057">
    <property type="reaction ID" value="UER00164"/>
</dbReference>
<dbReference type="Proteomes" id="UP000000607">
    <property type="component" value="Chromosome"/>
</dbReference>
<dbReference type="GO" id="GO:0070204">
    <property type="term" value="F:2-succinyl-5-enolpyruvyl-6-hydroxy-3-cyclohexene-1-carboxylic-acid synthase activity"/>
    <property type="evidence" value="ECO:0007669"/>
    <property type="project" value="UniProtKB-UniRule"/>
</dbReference>
<dbReference type="GO" id="GO:0000287">
    <property type="term" value="F:magnesium ion binding"/>
    <property type="evidence" value="ECO:0007669"/>
    <property type="project" value="UniProtKB-UniRule"/>
</dbReference>
<dbReference type="GO" id="GO:0030145">
    <property type="term" value="F:manganese ion binding"/>
    <property type="evidence" value="ECO:0007669"/>
    <property type="project" value="UniProtKB-UniRule"/>
</dbReference>
<dbReference type="GO" id="GO:0030976">
    <property type="term" value="F:thiamine pyrophosphate binding"/>
    <property type="evidence" value="ECO:0007669"/>
    <property type="project" value="UniProtKB-UniRule"/>
</dbReference>
<dbReference type="GO" id="GO:0009234">
    <property type="term" value="P:menaquinone biosynthetic process"/>
    <property type="evidence" value="ECO:0007669"/>
    <property type="project" value="UniProtKB-UniRule"/>
</dbReference>
<dbReference type="CDD" id="cd07037">
    <property type="entry name" value="TPP_PYR_MenD"/>
    <property type="match status" value="1"/>
</dbReference>
<dbReference type="CDD" id="cd02009">
    <property type="entry name" value="TPP_SHCHC_synthase"/>
    <property type="match status" value="1"/>
</dbReference>
<dbReference type="Gene3D" id="3.40.50.970">
    <property type="match status" value="2"/>
</dbReference>
<dbReference type="Gene3D" id="3.40.50.1220">
    <property type="entry name" value="TPP-binding domain"/>
    <property type="match status" value="1"/>
</dbReference>
<dbReference type="HAMAP" id="MF_01659">
    <property type="entry name" value="MenD"/>
    <property type="match status" value="1"/>
</dbReference>
<dbReference type="InterPro" id="IPR004433">
    <property type="entry name" value="MenaQ_synth_MenD"/>
</dbReference>
<dbReference type="InterPro" id="IPR032264">
    <property type="entry name" value="MenD_middle"/>
</dbReference>
<dbReference type="InterPro" id="IPR029061">
    <property type="entry name" value="THDP-binding"/>
</dbReference>
<dbReference type="InterPro" id="IPR012001">
    <property type="entry name" value="Thiamin_PyroP_enz_TPP-bd_dom"/>
</dbReference>
<dbReference type="InterPro" id="IPR011766">
    <property type="entry name" value="TPP_enzyme_TPP-bd"/>
</dbReference>
<dbReference type="NCBIfam" id="TIGR00173">
    <property type="entry name" value="menD"/>
    <property type="match status" value="1"/>
</dbReference>
<dbReference type="PANTHER" id="PTHR42916">
    <property type="entry name" value="2-SUCCINYL-5-ENOLPYRUVYL-6-HYDROXY-3-CYCLOHEXENE-1-CARBOXYLATE SYNTHASE"/>
    <property type="match status" value="1"/>
</dbReference>
<dbReference type="PANTHER" id="PTHR42916:SF1">
    <property type="entry name" value="PROTEIN PHYLLO, CHLOROPLASTIC"/>
    <property type="match status" value="1"/>
</dbReference>
<dbReference type="Pfam" id="PF02775">
    <property type="entry name" value="TPP_enzyme_C"/>
    <property type="match status" value="1"/>
</dbReference>
<dbReference type="Pfam" id="PF16582">
    <property type="entry name" value="TPP_enzyme_M_2"/>
    <property type="match status" value="1"/>
</dbReference>
<dbReference type="Pfam" id="PF02776">
    <property type="entry name" value="TPP_enzyme_N"/>
    <property type="match status" value="1"/>
</dbReference>
<dbReference type="PIRSF" id="PIRSF004983">
    <property type="entry name" value="MenD"/>
    <property type="match status" value="1"/>
</dbReference>
<dbReference type="SUPFAM" id="SSF52518">
    <property type="entry name" value="Thiamin diphosphate-binding fold (THDP-binding)"/>
    <property type="match status" value="2"/>
</dbReference>
<gene>
    <name evidence="1" type="primary">menD</name>
    <name type="ordered locus">MS1794</name>
</gene>
<protein>
    <recommendedName>
        <fullName evidence="1">2-succinyl-5-enolpyruvyl-6-hydroxy-3-cyclohexene-1-carboxylate synthase</fullName>
        <shortName evidence="1">SEPHCHC synthase</shortName>
        <ecNumber evidence="1">2.2.1.9</ecNumber>
    </recommendedName>
    <alternativeName>
        <fullName evidence="1">Menaquinone biosynthesis protein MenD</fullName>
    </alternativeName>
</protein>
<sequence length="568" mass="63347">MSVSTFNRCWSKVILETLTRHGVKHFCIAPGSRSTPLTLEANRLQEQRRALCHTHFDERGLGFFALGLAKSSQTPVAIIVTSGTAAANLYPAIIEARQTGDNLIVLTADRPDELIECGANQAILQQNMFAGYPVASVNLPRPSQDYIVSWLISTLDQACHQQAQQAGVIHINVPFAEPLYDADEDEIDVHPWLAPVQRWLNHNKPWADHQALQEEVVMHEHWDNWRTKRGVIVAGRLTQEQSMGITAWANTMGWVVLTDIQSGVEPSLPYADIWLANKTVREKLLQADLVIQLGYAFVSKRINQFLADFKGEYWIVDESAHRVDPYHHIHTRFTAKVHHWLRAHPPLRQKPWLLEPLALSKFCASFIEQQVGGNLNEASLAHHIERILPNNGILFLGNSLFVRLVDALGKLPEGYPVITNRGASGIDGLLATAAGVGMGSNQPVVAMIGDVSALYDLNSLALFKNVNQPTIIFLINNNGGAIFDMLPVESSVKSEFYRMPHHTEFSQAASMFDLKYARPYTWADLSSVLKQAYSRKEATVIEIKVGPMDGSNTYKRLIEQISYAVIGA</sequence>
<feature type="chain" id="PRO_0000341772" description="2-succinyl-5-enolpyruvyl-6-hydroxy-3-cyclohexene-1-carboxylate synthase">
    <location>
        <begin position="1"/>
        <end position="568"/>
    </location>
</feature>
<name>MEND_MANSM</name>
<keyword id="KW-0460">Magnesium</keyword>
<keyword id="KW-0464">Manganese</keyword>
<keyword id="KW-0474">Menaquinone biosynthesis</keyword>
<keyword id="KW-0479">Metal-binding</keyword>
<keyword id="KW-0786">Thiamine pyrophosphate</keyword>
<keyword id="KW-0808">Transferase</keyword>
<proteinExistence type="inferred from homology"/>
<accession>Q65RK9</accession>
<comment type="function">
    <text evidence="1">Catalyzes the thiamine diphosphate-dependent decarboxylation of 2-oxoglutarate and the subsequent addition of the resulting succinic semialdehyde-thiamine pyrophosphate anion to isochorismate to yield 2-succinyl-5-enolpyruvyl-6-hydroxy-3-cyclohexene-1-carboxylate (SEPHCHC).</text>
</comment>
<comment type="catalytic activity">
    <reaction evidence="1">
        <text>isochorismate + 2-oxoglutarate + H(+) = 5-enolpyruvoyl-6-hydroxy-2-succinyl-cyclohex-3-ene-1-carboxylate + CO2</text>
        <dbReference type="Rhea" id="RHEA:25593"/>
        <dbReference type="ChEBI" id="CHEBI:15378"/>
        <dbReference type="ChEBI" id="CHEBI:16526"/>
        <dbReference type="ChEBI" id="CHEBI:16810"/>
        <dbReference type="ChEBI" id="CHEBI:29780"/>
        <dbReference type="ChEBI" id="CHEBI:58818"/>
        <dbReference type="EC" id="2.2.1.9"/>
    </reaction>
</comment>
<comment type="cofactor">
    <cofactor evidence="1">
        <name>Mg(2+)</name>
        <dbReference type="ChEBI" id="CHEBI:18420"/>
    </cofactor>
    <cofactor evidence="1">
        <name>Mn(2+)</name>
        <dbReference type="ChEBI" id="CHEBI:29035"/>
    </cofactor>
</comment>
<comment type="cofactor">
    <cofactor evidence="1">
        <name>thiamine diphosphate</name>
        <dbReference type="ChEBI" id="CHEBI:58937"/>
    </cofactor>
    <text evidence="1">Binds 1 thiamine pyrophosphate per subunit.</text>
</comment>
<comment type="pathway">
    <text evidence="1">Quinol/quinone metabolism; 1,4-dihydroxy-2-naphthoate biosynthesis; 1,4-dihydroxy-2-naphthoate from chorismate: step 2/7.</text>
</comment>
<comment type="pathway">
    <text evidence="1">Quinol/quinone metabolism; menaquinone biosynthesis.</text>
</comment>
<comment type="subunit">
    <text evidence="1">Homodimer.</text>
</comment>
<comment type="similarity">
    <text evidence="1">Belongs to the TPP enzyme family. MenD subfamily.</text>
</comment>
<organism>
    <name type="scientific">Mannheimia succiniciproducens (strain KCTC 0769BP / MBEL55E)</name>
    <dbReference type="NCBI Taxonomy" id="221988"/>
    <lineage>
        <taxon>Bacteria</taxon>
        <taxon>Pseudomonadati</taxon>
        <taxon>Pseudomonadota</taxon>
        <taxon>Gammaproteobacteria</taxon>
        <taxon>Pasteurellales</taxon>
        <taxon>Pasteurellaceae</taxon>
        <taxon>Basfia</taxon>
    </lineage>
</organism>
<reference key="1">
    <citation type="journal article" date="2004" name="Nat. Biotechnol.">
        <title>The genome sequence of the capnophilic rumen bacterium Mannheimia succiniciproducens.</title>
        <authorList>
            <person name="Hong S.H."/>
            <person name="Kim J.S."/>
            <person name="Lee S.Y."/>
            <person name="In Y.H."/>
            <person name="Choi S.S."/>
            <person name="Rih J.-K."/>
            <person name="Kim C.H."/>
            <person name="Jeong H."/>
            <person name="Hur C.G."/>
            <person name="Kim J.J."/>
        </authorList>
    </citation>
    <scope>NUCLEOTIDE SEQUENCE [LARGE SCALE GENOMIC DNA]</scope>
    <source>
        <strain>KCTC 0769BP / MBEL55E</strain>
    </source>
</reference>